<proteinExistence type="inferred from homology"/>
<protein>
    <recommendedName>
        <fullName evidence="1">NAD(P)H dehydrogenase (quinone)</fullName>
        <ecNumber evidence="1">1.6.5.2</ecNumber>
    </recommendedName>
    <alternativeName>
        <fullName>Flavoprotein WrbA</fullName>
    </alternativeName>
    <alternativeName>
        <fullName evidence="1">NAD(P)H:quinone oxidoreductase</fullName>
        <shortName evidence="1">NQO</shortName>
    </alternativeName>
</protein>
<reference key="1">
    <citation type="journal article" date="2009" name="Genome Res.">
        <title>Whole genome sequence of Desulfovibrio magneticus strain RS-1 revealed common gene clusters in magnetotactic bacteria.</title>
        <authorList>
            <person name="Nakazawa H."/>
            <person name="Arakaki A."/>
            <person name="Narita-Yamada S."/>
            <person name="Yashiro I."/>
            <person name="Jinno K."/>
            <person name="Aoki N."/>
            <person name="Tsuruyama A."/>
            <person name="Okamura Y."/>
            <person name="Tanikawa S."/>
            <person name="Fujita N."/>
            <person name="Takeyama H."/>
            <person name="Matsunaga T."/>
        </authorList>
    </citation>
    <scope>NUCLEOTIDE SEQUENCE [LARGE SCALE GENOMIC DNA]</scope>
    <source>
        <strain>ATCC 700980 / DSM 13731 / RS-1</strain>
    </source>
</reference>
<dbReference type="EC" id="1.6.5.2" evidence="1"/>
<dbReference type="EMBL" id="AP010904">
    <property type="protein sequence ID" value="BAH73702.1"/>
    <property type="molecule type" value="Genomic_DNA"/>
</dbReference>
<dbReference type="RefSeq" id="WP_012749792.1">
    <property type="nucleotide sequence ID" value="NC_012796.1"/>
</dbReference>
<dbReference type="SMR" id="C4XGC2"/>
<dbReference type="STRING" id="573370.DMR_02110"/>
<dbReference type="KEGG" id="dma:DMR_02110"/>
<dbReference type="eggNOG" id="COG0655">
    <property type="taxonomic scope" value="Bacteria"/>
</dbReference>
<dbReference type="HOGENOM" id="CLU_051402_0_2_7"/>
<dbReference type="OrthoDB" id="9801479at2"/>
<dbReference type="Proteomes" id="UP000009071">
    <property type="component" value="Chromosome"/>
</dbReference>
<dbReference type="GO" id="GO:0016020">
    <property type="term" value="C:membrane"/>
    <property type="evidence" value="ECO:0007669"/>
    <property type="project" value="TreeGrafter"/>
</dbReference>
<dbReference type="GO" id="GO:0050660">
    <property type="term" value="F:flavin adenine dinucleotide binding"/>
    <property type="evidence" value="ECO:0007669"/>
    <property type="project" value="UniProtKB-UniRule"/>
</dbReference>
<dbReference type="GO" id="GO:0010181">
    <property type="term" value="F:FMN binding"/>
    <property type="evidence" value="ECO:0007669"/>
    <property type="project" value="InterPro"/>
</dbReference>
<dbReference type="GO" id="GO:0051287">
    <property type="term" value="F:NAD binding"/>
    <property type="evidence" value="ECO:0007669"/>
    <property type="project" value="UniProtKB-UniRule"/>
</dbReference>
<dbReference type="GO" id="GO:0050136">
    <property type="term" value="F:NADH:ubiquinone reductase (non-electrogenic) activity"/>
    <property type="evidence" value="ECO:0007669"/>
    <property type="project" value="RHEA"/>
</dbReference>
<dbReference type="GO" id="GO:0050661">
    <property type="term" value="F:NADP binding"/>
    <property type="evidence" value="ECO:0007669"/>
    <property type="project" value="UniProtKB-UniRule"/>
</dbReference>
<dbReference type="GO" id="GO:0008753">
    <property type="term" value="F:NADPH dehydrogenase (quinone) activity"/>
    <property type="evidence" value="ECO:0007669"/>
    <property type="project" value="RHEA"/>
</dbReference>
<dbReference type="FunFam" id="3.40.50.360:FF:000001">
    <property type="entry name" value="NAD(P)H dehydrogenase (Quinone) FQR1-like"/>
    <property type="match status" value="1"/>
</dbReference>
<dbReference type="Gene3D" id="3.40.50.360">
    <property type="match status" value="1"/>
</dbReference>
<dbReference type="HAMAP" id="MF_01017">
    <property type="entry name" value="NQOR"/>
    <property type="match status" value="1"/>
</dbReference>
<dbReference type="InterPro" id="IPR008254">
    <property type="entry name" value="Flavodoxin/NO_synth"/>
</dbReference>
<dbReference type="InterPro" id="IPR029039">
    <property type="entry name" value="Flavoprotein-like_sf"/>
</dbReference>
<dbReference type="InterPro" id="IPR010089">
    <property type="entry name" value="Flavoprotein_WrbA-like"/>
</dbReference>
<dbReference type="InterPro" id="IPR005025">
    <property type="entry name" value="FMN_Rdtase-like_dom"/>
</dbReference>
<dbReference type="InterPro" id="IPR037513">
    <property type="entry name" value="NQO"/>
</dbReference>
<dbReference type="NCBIfam" id="TIGR01755">
    <property type="entry name" value="flav_wrbA"/>
    <property type="match status" value="1"/>
</dbReference>
<dbReference type="NCBIfam" id="NF002999">
    <property type="entry name" value="PRK03767.1"/>
    <property type="match status" value="1"/>
</dbReference>
<dbReference type="PANTHER" id="PTHR30546">
    <property type="entry name" value="FLAVODOXIN-RELATED PROTEIN WRBA-RELATED"/>
    <property type="match status" value="1"/>
</dbReference>
<dbReference type="PANTHER" id="PTHR30546:SF23">
    <property type="entry name" value="FLAVOPROTEIN-LIKE PROTEIN YCP4-RELATED"/>
    <property type="match status" value="1"/>
</dbReference>
<dbReference type="Pfam" id="PF03358">
    <property type="entry name" value="FMN_red"/>
    <property type="match status" value="1"/>
</dbReference>
<dbReference type="SUPFAM" id="SSF52218">
    <property type="entry name" value="Flavoproteins"/>
    <property type="match status" value="1"/>
</dbReference>
<dbReference type="PROSITE" id="PS50902">
    <property type="entry name" value="FLAVODOXIN_LIKE"/>
    <property type="match status" value="1"/>
</dbReference>
<gene>
    <name type="ordered locus">DMR_02110</name>
</gene>
<comment type="catalytic activity">
    <reaction evidence="1">
        <text>a quinone + NADH + H(+) = a quinol + NAD(+)</text>
        <dbReference type="Rhea" id="RHEA:46160"/>
        <dbReference type="ChEBI" id="CHEBI:15378"/>
        <dbReference type="ChEBI" id="CHEBI:24646"/>
        <dbReference type="ChEBI" id="CHEBI:57540"/>
        <dbReference type="ChEBI" id="CHEBI:57945"/>
        <dbReference type="ChEBI" id="CHEBI:132124"/>
        <dbReference type="EC" id="1.6.5.2"/>
    </reaction>
</comment>
<comment type="catalytic activity">
    <reaction evidence="1">
        <text>a quinone + NADPH + H(+) = a quinol + NADP(+)</text>
        <dbReference type="Rhea" id="RHEA:46164"/>
        <dbReference type="ChEBI" id="CHEBI:15378"/>
        <dbReference type="ChEBI" id="CHEBI:24646"/>
        <dbReference type="ChEBI" id="CHEBI:57783"/>
        <dbReference type="ChEBI" id="CHEBI:58349"/>
        <dbReference type="ChEBI" id="CHEBI:132124"/>
        <dbReference type="EC" id="1.6.5.2"/>
    </reaction>
</comment>
<comment type="cofactor">
    <cofactor evidence="1">
        <name>FMN</name>
        <dbReference type="ChEBI" id="CHEBI:58210"/>
    </cofactor>
    <text evidence="1">Binds 1 FMN per monomer.</text>
</comment>
<comment type="similarity">
    <text evidence="1">Belongs to the WrbA family.</text>
</comment>
<sequence>MNVLIVYYSLYGHVAAMAQAVAEGVHQVPGMTATLRRVPETLSEEVIGKMGATEAQKALSHVPACTLEELEDADAIVFGTPTRFGNMCGQMRQFLDATGQIWMRGGLVGKPGGVFCSTATQHGGQETTLMSFIQTLLHHGMIVVGLPYSFAGQMRLDEVTGGSPYGATTIAGGDGSRMPSENELDAARFQGRHIADVTRRLRA</sequence>
<feature type="chain" id="PRO_1000213244" description="NAD(P)H dehydrogenase (quinone)">
    <location>
        <begin position="1"/>
        <end position="203"/>
    </location>
</feature>
<feature type="domain" description="Flavodoxin-like" evidence="1">
    <location>
        <begin position="3"/>
        <end position="194"/>
    </location>
</feature>
<feature type="binding site" evidence="1">
    <location>
        <begin position="9"/>
        <end position="14"/>
    </location>
    <ligand>
        <name>FMN</name>
        <dbReference type="ChEBI" id="CHEBI:58210"/>
    </ligand>
</feature>
<feature type="binding site" evidence="1">
    <location>
        <position position="11"/>
    </location>
    <ligand>
        <name>NAD(+)</name>
        <dbReference type="ChEBI" id="CHEBI:57540"/>
    </ligand>
</feature>
<feature type="binding site" evidence="1">
    <location>
        <begin position="82"/>
        <end position="84"/>
    </location>
    <ligand>
        <name>FMN</name>
        <dbReference type="ChEBI" id="CHEBI:58210"/>
    </ligand>
</feature>
<feature type="binding site" evidence="1">
    <location>
        <position position="102"/>
    </location>
    <ligand>
        <name>substrate</name>
    </ligand>
</feature>
<feature type="binding site" evidence="1">
    <location>
        <begin position="117"/>
        <end position="123"/>
    </location>
    <ligand>
        <name>FMN</name>
        <dbReference type="ChEBI" id="CHEBI:58210"/>
    </ligand>
</feature>
<feature type="binding site" evidence="1">
    <location>
        <position position="138"/>
    </location>
    <ligand>
        <name>FMN</name>
        <dbReference type="ChEBI" id="CHEBI:58210"/>
    </ligand>
</feature>
<accession>C4XGC2</accession>
<keyword id="KW-0285">Flavoprotein</keyword>
<keyword id="KW-0288">FMN</keyword>
<keyword id="KW-0520">NAD</keyword>
<keyword id="KW-0521">NADP</keyword>
<keyword id="KW-0547">Nucleotide-binding</keyword>
<keyword id="KW-0560">Oxidoreductase</keyword>
<evidence type="ECO:0000255" key="1">
    <source>
        <dbReference type="HAMAP-Rule" id="MF_01017"/>
    </source>
</evidence>
<organism>
    <name type="scientific">Solidesulfovibrio magneticus (strain ATCC 700980 / DSM 13731 / RS-1)</name>
    <name type="common">Desulfovibrio magneticus</name>
    <dbReference type="NCBI Taxonomy" id="573370"/>
    <lineage>
        <taxon>Bacteria</taxon>
        <taxon>Pseudomonadati</taxon>
        <taxon>Thermodesulfobacteriota</taxon>
        <taxon>Desulfovibrionia</taxon>
        <taxon>Desulfovibrionales</taxon>
        <taxon>Desulfovibrionaceae</taxon>
        <taxon>Solidesulfovibrio</taxon>
    </lineage>
</organism>
<name>NQOR_SOLM1</name>